<reference key="1">
    <citation type="submission" date="2006-09" db="EMBL/GenBank/DDBJ databases">
        <authorList>
            <consortium name="NIH - Mammalian Gene Collection (MGC) project"/>
        </authorList>
    </citation>
    <scope>NUCLEOTIDE SEQUENCE [LARGE SCALE MRNA]</scope>
    <source>
        <strain>Hereford</strain>
        <tissue>Basal ganglia</tissue>
        <tissue>Fetal pons</tissue>
    </source>
</reference>
<keyword id="KW-0227">DNA damage</keyword>
<keyword id="KW-0233">DNA recombination</keyword>
<keyword id="KW-0234">DNA repair</keyword>
<keyword id="KW-0539">Nucleus</keyword>
<keyword id="KW-0597">Phosphoprotein</keyword>
<keyword id="KW-1185">Reference proteome</keyword>
<keyword id="KW-0804">Transcription</keyword>
<keyword id="KW-0805">Transcription regulation</keyword>
<protein>
    <recommendedName>
        <fullName>PAXIP1-associated glutamate-rich protein 1</fullName>
    </recommendedName>
    <alternativeName>
        <fullName>PAXIP1-associated protein 1</fullName>
    </alternativeName>
    <alternativeName>
        <fullName>PTIP-associated protein 1</fullName>
    </alternativeName>
</protein>
<name>PAGR1_BOVIN</name>
<evidence type="ECO:0000250" key="1">
    <source>
        <dbReference type="UniProtKB" id="Q5M865"/>
    </source>
</evidence>
<evidence type="ECO:0000250" key="2">
    <source>
        <dbReference type="UniProtKB" id="Q99L02"/>
    </source>
</evidence>
<evidence type="ECO:0000250" key="3">
    <source>
        <dbReference type="UniProtKB" id="Q9BTK6"/>
    </source>
</evidence>
<evidence type="ECO:0000256" key="4">
    <source>
        <dbReference type="SAM" id="MobiDB-lite"/>
    </source>
</evidence>
<evidence type="ECO:0000305" key="5"/>
<feature type="chain" id="PRO_0000248333" description="PAXIP1-associated glutamate-rich protein 1">
    <location>
        <begin position="1"/>
        <end position="253"/>
    </location>
</feature>
<feature type="region of interest" description="Disordered" evidence="4">
    <location>
        <begin position="1"/>
        <end position="109"/>
    </location>
</feature>
<feature type="region of interest" description="Sufficient for interaction with NCOA1" evidence="3">
    <location>
        <begin position="116"/>
        <end position="160"/>
    </location>
</feature>
<feature type="region of interest" description="Disordered" evidence="4">
    <location>
        <begin position="128"/>
        <end position="253"/>
    </location>
</feature>
<feature type="region of interest" description="Sufficient for interaction with ESR1" evidence="3">
    <location>
        <begin position="161"/>
        <end position="253"/>
    </location>
</feature>
<feature type="compositionally biased region" description="Basic and acidic residues" evidence="4">
    <location>
        <begin position="51"/>
        <end position="62"/>
    </location>
</feature>
<feature type="compositionally biased region" description="Acidic residues" evidence="4">
    <location>
        <begin position="142"/>
        <end position="159"/>
    </location>
</feature>
<feature type="compositionally biased region" description="Basic and acidic residues" evidence="4">
    <location>
        <begin position="195"/>
        <end position="223"/>
    </location>
</feature>
<feature type="modified residue" description="Phosphothreonine" evidence="1">
    <location>
        <position position="138"/>
    </location>
</feature>
<feature type="modified residue" description="Phosphoserine" evidence="1">
    <location>
        <position position="143"/>
    </location>
</feature>
<feature type="modified residue" description="Phosphoserine" evidence="1">
    <location>
        <position position="148"/>
    </location>
</feature>
<feature type="modified residue" description="Phosphoserine" evidence="1">
    <location>
        <position position="237"/>
    </location>
</feature>
<accession>Q1LZ80</accession>
<accession>A4FV67</accession>
<dbReference type="EMBL" id="BC116156">
    <property type="protein sequence ID" value="AAI16157.1"/>
    <property type="molecule type" value="mRNA"/>
</dbReference>
<dbReference type="EMBL" id="BC118095">
    <property type="protein sequence ID" value="AAI18096.1"/>
    <property type="molecule type" value="mRNA"/>
</dbReference>
<dbReference type="EMBL" id="BC123802">
    <property type="protein sequence ID" value="AAI23803.1"/>
    <property type="molecule type" value="mRNA"/>
</dbReference>
<dbReference type="RefSeq" id="NP_001069100.1">
    <property type="nucleotide sequence ID" value="NM_001075632.1"/>
</dbReference>
<dbReference type="RefSeq" id="XP_005224957.1">
    <property type="nucleotide sequence ID" value="XM_005224900.5"/>
</dbReference>
<dbReference type="RefSeq" id="XP_015315856.1">
    <property type="nucleotide sequence ID" value="XM_015460370.2"/>
</dbReference>
<dbReference type="FunCoup" id="Q1LZ80">
    <property type="interactions" value="1329"/>
</dbReference>
<dbReference type="STRING" id="9913.ENSBTAP00000042638"/>
<dbReference type="PaxDb" id="9913-ENSBTAP00000014478"/>
<dbReference type="GeneID" id="513650"/>
<dbReference type="KEGG" id="bta:513650"/>
<dbReference type="CTD" id="79447"/>
<dbReference type="VEuPathDB" id="HostDB:ENSBTAG00000010904"/>
<dbReference type="eggNOG" id="ENOG502S0T8">
    <property type="taxonomic scope" value="Eukaryota"/>
</dbReference>
<dbReference type="HOGENOM" id="CLU_088613_1_0_1"/>
<dbReference type="InParanoid" id="Q1LZ80"/>
<dbReference type="OMA" id="CVPCSDD"/>
<dbReference type="OrthoDB" id="10067843at2759"/>
<dbReference type="TreeFam" id="TF326621"/>
<dbReference type="Reactome" id="R-BTA-9772755">
    <property type="pathway name" value="Formation of WDR5-containing histone-modifying complexes"/>
</dbReference>
<dbReference type="Reactome" id="R-BTA-9818564">
    <property type="pathway name" value="Epigenetic regulation of gene expression by MLL3 and MLL4 complexes"/>
</dbReference>
<dbReference type="Proteomes" id="UP000009136">
    <property type="component" value="Chromosome 25"/>
</dbReference>
<dbReference type="Bgee" id="ENSBTAG00000010904">
    <property type="expression patterns" value="Expressed in anterior segment of eyeball and 106 other cell types or tissues"/>
</dbReference>
<dbReference type="GO" id="GO:0044666">
    <property type="term" value="C:MLL3/4 complex"/>
    <property type="evidence" value="ECO:0000318"/>
    <property type="project" value="GO_Central"/>
</dbReference>
<dbReference type="GO" id="GO:0030331">
    <property type="term" value="F:nuclear estrogen receptor binding"/>
    <property type="evidence" value="ECO:0000318"/>
    <property type="project" value="GO_Central"/>
</dbReference>
<dbReference type="GO" id="GO:0006310">
    <property type="term" value="P:DNA recombination"/>
    <property type="evidence" value="ECO:0007669"/>
    <property type="project" value="UniProtKB-KW"/>
</dbReference>
<dbReference type="GO" id="GO:0006281">
    <property type="term" value="P:DNA repair"/>
    <property type="evidence" value="ECO:0007669"/>
    <property type="project" value="UniProtKB-KW"/>
</dbReference>
<dbReference type="GO" id="GO:1902808">
    <property type="term" value="P:positive regulation of cell cycle G1/S phase transition"/>
    <property type="evidence" value="ECO:0000318"/>
    <property type="project" value="GO_Central"/>
</dbReference>
<dbReference type="GO" id="GO:0033148">
    <property type="term" value="P:positive regulation of intracellular estrogen receptor signaling pathway"/>
    <property type="evidence" value="ECO:0000318"/>
    <property type="project" value="GO_Central"/>
</dbReference>
<dbReference type="InterPro" id="IPR028213">
    <property type="entry name" value="PA1"/>
</dbReference>
<dbReference type="PANTHER" id="PTHR28467">
    <property type="entry name" value="PAXIP1-ASSOCIATED GLUTAMATE-RICH PROTEIN 1"/>
    <property type="match status" value="1"/>
</dbReference>
<dbReference type="PANTHER" id="PTHR28467:SF1">
    <property type="entry name" value="PAXIP1-ASSOCIATED GLUTAMATE-RICH PROTEIN 1"/>
    <property type="match status" value="1"/>
</dbReference>
<dbReference type="Pfam" id="PF15364">
    <property type="entry name" value="PAXIP1_C"/>
    <property type="match status" value="1"/>
</dbReference>
<sequence>MSLVRGHGDIAATTAAPLSEEGEVTSGLQALAVEDTGGPSASADQAEEEGEGGREEAEHEGSGAEEVQGEAPSPEGEERAKGESEDWCVPCSDEEVELPADGQSWMPPPSEIQRLYELLAAHGTLELQAEILPRRPPTPEAQSEEERSDEEPEAKEEEEEKPHMPTEFDFDDEPTTPKDSLIDRRRTPGSSARSQKREARLDKVLSDMKRHKKLEEQILRTGRDLFSLDSEDASPASPPLRSSGSLFPRQRKY</sequence>
<proteinExistence type="evidence at transcript level"/>
<comment type="function">
    <text evidence="2 3">Its association with the histone methyltransferase MLL2/MLL3 complex is suggesting a role in epigenetic transcriptional activation. However, in association with PAXIP1/PTIP is proposed to function at least in part independently of the MLL2/MLL3 complex. Proposed to be recruited by PAXIP1 to sites of DNA damage where the PAGR1:PAXIP1 complex is required for cell survival in response to DNA damage independently of the MLL2/MLL3 complex. However, its function in DNA damage has been questioned. During immunoglobulin class switching in activated B-cells is involved in transcription regulation of downstream switch regions at the immunoglobulin heavy-chain (Igh) locus independently of the MLL2/MLL3 complex. Involved in both estrogen receptor-regulated gene transcription and estrogen-stimulated G1/S cell-cycle transition. Acts as a transcriptional cofactor for nuclear hormone receptors. Inhibits the induction properties of several steroid receptors such as NR3C1, AR and PPARG; the mechanism of inhibition appears to be gene-dependent.</text>
</comment>
<comment type="subunit">
    <text evidence="2 3">Component of the KMT2 family MLL2/MLL3 complex, at least composed of the histone methyltransferases KMT2D and/or KMT2C, the common complex subunits ASH2L, RBBP5, WDR5 and DPY30, and the complex type-specific subunits PAXIP1/PTIP, PAGR1, NCOA6 and KDM6A; PAXIP1 is required for the association with the MLL2/MLL3 complex (By similarity). Forms a constitutive complex with PAXIP1/PTIP independently of the MLL2/MLL3 complex. Interacts with NCOA1, ESR1, NR3C1, AR.</text>
</comment>
<comment type="subcellular location">
    <subcellularLocation>
        <location evidence="2 3">Nucleus</location>
    </subcellularLocation>
</comment>
<comment type="caution">
    <text evidence="5">The terminology of MLL proteins in mammalia is not consistent also concerning the terminology of MLL protein-containing complexes. The decribed MLL2/MLL3 complex is commonly described as MLL3/MLL4 complex in literature.</text>
</comment>
<gene>
    <name type="primary">PAGR1</name>
    <name type="synonym">PA1</name>
</gene>
<organism>
    <name type="scientific">Bos taurus</name>
    <name type="common">Bovine</name>
    <dbReference type="NCBI Taxonomy" id="9913"/>
    <lineage>
        <taxon>Eukaryota</taxon>
        <taxon>Metazoa</taxon>
        <taxon>Chordata</taxon>
        <taxon>Craniata</taxon>
        <taxon>Vertebrata</taxon>
        <taxon>Euteleostomi</taxon>
        <taxon>Mammalia</taxon>
        <taxon>Eutheria</taxon>
        <taxon>Laurasiatheria</taxon>
        <taxon>Artiodactyla</taxon>
        <taxon>Ruminantia</taxon>
        <taxon>Pecora</taxon>
        <taxon>Bovidae</taxon>
        <taxon>Bovinae</taxon>
        <taxon>Bos</taxon>
    </lineage>
</organism>